<proteinExistence type="inferred from homology"/>
<dbReference type="EC" id="2.3.3.-" evidence="7"/>
<dbReference type="EMBL" id="AB872927">
    <property type="protein sequence ID" value="BAO10625.1"/>
    <property type="molecule type" value="Genomic_DNA"/>
</dbReference>
<dbReference type="SMR" id="V5XYR2"/>
<dbReference type="VEuPathDB" id="FungiDB:CC77DRAFT_1017717"/>
<dbReference type="GO" id="GO:0004421">
    <property type="term" value="F:hydroxymethylglutaryl-CoA synthase activity"/>
    <property type="evidence" value="ECO:0007669"/>
    <property type="project" value="InterPro"/>
</dbReference>
<dbReference type="GO" id="GO:0006084">
    <property type="term" value="P:acetyl-CoA metabolic process"/>
    <property type="evidence" value="ECO:0007669"/>
    <property type="project" value="InterPro"/>
</dbReference>
<dbReference type="GO" id="GO:0006696">
    <property type="term" value="P:ergosterol biosynthetic process"/>
    <property type="evidence" value="ECO:0007669"/>
    <property type="project" value="TreeGrafter"/>
</dbReference>
<dbReference type="GO" id="GO:0010142">
    <property type="term" value="P:farnesyl diphosphate biosynthetic process, mevalonate pathway"/>
    <property type="evidence" value="ECO:0007669"/>
    <property type="project" value="InterPro"/>
</dbReference>
<dbReference type="CDD" id="cd00827">
    <property type="entry name" value="init_cond_enzymes"/>
    <property type="match status" value="1"/>
</dbReference>
<dbReference type="FunFam" id="3.40.47.10:FF:000008">
    <property type="entry name" value="3-hydroxy-3-methylglutaryl coenzyme A synthase"/>
    <property type="match status" value="1"/>
</dbReference>
<dbReference type="Gene3D" id="3.40.47.10">
    <property type="match status" value="1"/>
</dbReference>
<dbReference type="InterPro" id="IPR000590">
    <property type="entry name" value="HMG_CoA_synt_AS"/>
</dbReference>
<dbReference type="InterPro" id="IPR013746">
    <property type="entry name" value="HMG_CoA_synt_C_dom"/>
</dbReference>
<dbReference type="InterPro" id="IPR013528">
    <property type="entry name" value="HMG_CoA_synth_N"/>
</dbReference>
<dbReference type="InterPro" id="IPR010122">
    <property type="entry name" value="HMG_CoA_synthase_euk"/>
</dbReference>
<dbReference type="InterPro" id="IPR016039">
    <property type="entry name" value="Thiolase-like"/>
</dbReference>
<dbReference type="NCBIfam" id="TIGR01833">
    <property type="entry name" value="HMG-CoA-S_euk"/>
    <property type="match status" value="1"/>
</dbReference>
<dbReference type="PANTHER" id="PTHR43323">
    <property type="entry name" value="3-HYDROXY-3-METHYLGLUTARYL COENZYME A SYNTHASE"/>
    <property type="match status" value="1"/>
</dbReference>
<dbReference type="PANTHER" id="PTHR43323:SF2">
    <property type="entry name" value="HYDROXYMETHYLGLUTARYL-COA SYNTHASE"/>
    <property type="match status" value="1"/>
</dbReference>
<dbReference type="Pfam" id="PF08540">
    <property type="entry name" value="HMG_CoA_synt_C"/>
    <property type="match status" value="1"/>
</dbReference>
<dbReference type="Pfam" id="PF01154">
    <property type="entry name" value="HMG_CoA_synt_N"/>
    <property type="match status" value="1"/>
</dbReference>
<dbReference type="SUPFAM" id="SSF53901">
    <property type="entry name" value="Thiolase-like"/>
    <property type="match status" value="2"/>
</dbReference>
<dbReference type="PROSITE" id="PS01226">
    <property type="entry name" value="HMG_COA_SYNTHASE"/>
    <property type="match status" value="1"/>
</dbReference>
<comment type="function">
    <text evidence="1 2 3 4 5">Hydroxymethylglutaryl-CoA synthase-like protein; part of the gene clusters that mediate the biosynthesis of the host-selective toxins (HSTs) AK-toxins responsible for Japanese pear black spot disease by the Japanese pear pathotype (PubMed:24611558). AK-toxins are esters of 9,10-epoxy 8-hydroxy 9-methyldecatrienoic acid (EDA) (PubMed:22846083). On cellular level, AK-toxins affect plasma membrane of susceptible cells and cause a sudden increase in loss of K(+) after a few minutes of toxin treatment (PubMed:22846083). The acyl-CoA ligase AKT1, the hydrolase AKT2 and enoyl-CoA hydratase AKT3 are all involved in the biosynthesis of the AK-, AF- and ACT-toxin common 9,10-epoxy-8-hydroxy-9-methyl-decatrienoic acid (EDA) structural moiety (PubMed:10432635, PubMed:10975654, PubMed:22846083). Part of the EDA biosynthesis occurs in the peroxisome since these 3 enzymes are localized in peroxisomes (PubMed:20348386). The exact roles of the 3 enzymes, as well as of additional AK-toxin clusters enzymes, including AKT4, AKT6 and AKTS1, have still to be elucidated (PubMed:10432635, PubMed:10975654, PubMed:22846083). The Cytochrome P450 monooxygenase AKT7 on the other side functions to limit production of EDA and AK-toxin, probably via the catalysis of a side reaction of EDA or its precursor (PubMed:24611558).</text>
</comment>
<comment type="pathway">
    <text evidence="8">Mycotoxin biosynthesis.</text>
</comment>
<comment type="miscellaneous">
    <text evidence="2">Gene clusters encoding host-selective toxins (HSTs) are localized on conditionally dispensable chromosomes (CDCs), also called supernumerary chromosomes, where they are present in multiple copies (PubMed:10975654). The CDCs are not essential for saprophytic growth but controls host-selective pathogenicity (PubMed:10975654).</text>
</comment>
<comment type="similarity">
    <text evidence="7">Belongs to the thiolase-like superfamily. HMG-CoA synthase family.</text>
</comment>
<sequence>MSFCDDREGQRALRILQARLIRSPDACSFALTAVSSLLRKYSIDPRRIGRLEVGTESLVDKSKSIKSFVMQLFEESGNFDIEGVDTVNACYGGTNALFNAVNWVESSAWDGRDAIVVASDISLYGKGNARPTGGAGCVAMLVGPDAPIAFEPGRRGSYMAHTYDFYKPDFTTEYPYINGKHSIECYIQAVEACYRAYTKRERRATERLEEERPDHQAGYETPLDRFDYLCFHSPTNKLVSKSYARLLYVDYLENPANPIFAEVPDSIREVEYRASLTDKSIEKTFMGLAQERFARCVQPSTEIPNMCGNMYSASVYGSLCSLLCNVNSETLLGKRITIFSYGSGLASSMFSLKVRGSTKQMAEKLDVHRRLVDRVVVSPEDVRERAYLKKCFKPKGGAGPIPADVYSLAEVDELFRRVYTVKS</sequence>
<keyword id="KW-0808">Transferase</keyword>
<organism>
    <name type="scientific">Alternaria alternata</name>
    <name type="common">Alternaria rot fungus</name>
    <name type="synonym">Torula alternata</name>
    <dbReference type="NCBI Taxonomy" id="5599"/>
    <lineage>
        <taxon>Eukaryota</taxon>
        <taxon>Fungi</taxon>
        <taxon>Dikarya</taxon>
        <taxon>Ascomycota</taxon>
        <taxon>Pezizomycotina</taxon>
        <taxon>Dothideomycetes</taxon>
        <taxon>Pleosporomycetidae</taxon>
        <taxon>Pleosporales</taxon>
        <taxon>Pleosporineae</taxon>
        <taxon>Pleosporaceae</taxon>
        <taxon>Alternaria</taxon>
        <taxon>Alternaria sect. Alternaria</taxon>
        <taxon>Alternaria alternata complex</taxon>
    </lineage>
</organism>
<gene>
    <name evidence="6" type="primary">AKT4-1</name>
</gene>
<evidence type="ECO:0000269" key="1">
    <source>
    </source>
</evidence>
<evidence type="ECO:0000269" key="2">
    <source>
    </source>
</evidence>
<evidence type="ECO:0000269" key="3">
    <source>
    </source>
</evidence>
<evidence type="ECO:0000269" key="4">
    <source>
    </source>
</evidence>
<evidence type="ECO:0000303" key="5">
    <source>
    </source>
</evidence>
<evidence type="ECO:0000303" key="6">
    <source ref="1"/>
</evidence>
<evidence type="ECO:0000305" key="7"/>
<evidence type="ECO:0000305" key="8">
    <source>
    </source>
</evidence>
<reference key="1">
    <citation type="submission" date="2013-11" db="EMBL/GenBank/DDBJ databases">
        <title>The gene cluster involved in AK-toxin biosynthesis of Alternaria alternata.</title>
        <authorList>
            <person name="Mase R."/>
            <person name="Tanaka A."/>
            <person name="Harimoto Y."/>
            <person name="Tsuge T."/>
        </authorList>
    </citation>
    <scope>NUCLEOTIDE SEQUENCE [GENOMIC DNA]</scope>
    <source>
        <strain>15A</strain>
    </source>
</reference>
<reference key="2">
    <citation type="journal article" date="1999" name="Mol. Plant Microbe Interact.">
        <title>Insertional mutagenesis and cloning of the genes required for biosynthesis of the host-specific AK-toxin in the Japanese pear pathotype of Alternaria alternata.</title>
        <authorList>
            <person name="Tanaka A."/>
            <person name="Shiotani H."/>
            <person name="Yamamoto M."/>
            <person name="Tsuge T."/>
        </authorList>
    </citation>
    <scope>FUNCTION</scope>
    <source>
        <strain>15A</strain>
    </source>
</reference>
<reference key="3">
    <citation type="journal article" date="2000" name="Mol. Plant Microbe Interact.">
        <title>Structural and functional complexity of the genomic region controlling AK-toxin biosynthesis and pathogenicity in the Japanese pear pathotype of Alternaria alternata.</title>
        <authorList>
            <person name="Tanaka A."/>
            <person name="Tsuge T."/>
        </authorList>
    </citation>
    <scope>FUNCTION</scope>
</reference>
<reference key="4">
    <citation type="journal article" date="2010" name="Eukaryot. Cell">
        <title>Contribution of peroxisomes to secondary metabolism and pathogenicity in the fungal plant pathogen Alternaria alternata.</title>
        <authorList>
            <person name="Imazaki A."/>
            <person name="Tanaka A."/>
            <person name="Harimoto Y."/>
            <person name="Yamamoto M."/>
            <person name="Akimitsu K."/>
            <person name="Park P."/>
            <person name="Tsuge T."/>
        </authorList>
    </citation>
    <scope>FUNCTION</scope>
</reference>
<reference key="5">
    <citation type="journal article" date="2013" name="FEMS Microbiol. Rev.">
        <title>Host-selective toxins produced by the plant pathogenic fungus Alternaria alternata.</title>
        <authorList>
            <person name="Tsuge T."/>
            <person name="Harimoto Y."/>
            <person name="Akimitsu K."/>
            <person name="Ohtani K."/>
            <person name="Kodama M."/>
            <person name="Akagi Y."/>
            <person name="Egusa M."/>
            <person name="Yamamoto M."/>
            <person name="Otani H."/>
        </authorList>
    </citation>
    <scope>REVIEW ON HOST-SELECTIVE TOXINS</scope>
</reference>
<reference key="6">
    <citation type="journal article" date="2014" name="New Phytol.">
        <title>Complex regulation of secondary metabolism controlling pathogenicity in the phytopathogenic fungus Alternaria alternata.</title>
        <authorList>
            <person name="Takaoka S."/>
            <person name="Kurata M."/>
            <person name="Harimoto Y."/>
            <person name="Hatta R."/>
            <person name="Yamamoto M."/>
            <person name="Akimitsu K."/>
            <person name="Tsuge T."/>
        </authorList>
    </citation>
    <scope>FUNCTION</scope>
    <scope>PATHWAY</scope>
    <source>
        <strain>15A</strain>
    </source>
</reference>
<feature type="chain" id="PRO_0000444868" description="Hydroxymethylglutaryl-CoA synthase-like protein AKT4-1">
    <location>
        <begin position="1"/>
        <end position="423"/>
    </location>
</feature>
<protein>
    <recommendedName>
        <fullName evidence="7">Hydroxymethylglutaryl-CoA synthase-like protein AKT4-1</fullName>
        <ecNumber evidence="7">2.3.3.-</ecNumber>
    </recommendedName>
    <alternativeName>
        <fullName evidence="6">AK-toxin biosynthesis protein 4-1</fullName>
    </alternativeName>
</protein>
<accession>V5XYR2</accession>
<name>AKT41_ALTAL</name>